<gene>
    <name type="primary">folE</name>
    <name type="ordered locus">c2688</name>
</gene>
<organism>
    <name type="scientific">Escherichia coli O6:H1 (strain CFT073 / ATCC 700928 / UPEC)</name>
    <dbReference type="NCBI Taxonomy" id="199310"/>
    <lineage>
        <taxon>Bacteria</taxon>
        <taxon>Pseudomonadati</taxon>
        <taxon>Pseudomonadota</taxon>
        <taxon>Gammaproteobacteria</taxon>
        <taxon>Enterobacterales</taxon>
        <taxon>Enterobacteriaceae</taxon>
        <taxon>Escherichia</taxon>
    </lineage>
</organism>
<sequence>MPSLSKEAALVHEALVARGLETPLRPPVHEMDNETRKSLIAGHMTEIMQLLNLDLADDSLMETPHRIAKMYVDEIFSGLDYANFPKITLIENKMKVDEMVTVRDITLTSTCEHHFVTIDGKATVAYIPKDSVIGLSKINRIVQFFAQRPQVQERLTQQILIALQTLLGTNNVAVSIDAVHYCVKARGIRDATSATTTTSLGGLFKSSQNTRHEFLRAVRHHN</sequence>
<comment type="catalytic activity">
    <reaction>
        <text>GTP + H2O = 7,8-dihydroneopterin 3'-triphosphate + formate + H(+)</text>
        <dbReference type="Rhea" id="RHEA:17473"/>
        <dbReference type="ChEBI" id="CHEBI:15377"/>
        <dbReference type="ChEBI" id="CHEBI:15378"/>
        <dbReference type="ChEBI" id="CHEBI:15740"/>
        <dbReference type="ChEBI" id="CHEBI:37565"/>
        <dbReference type="ChEBI" id="CHEBI:58462"/>
        <dbReference type="EC" id="3.5.4.16"/>
    </reaction>
</comment>
<comment type="pathway">
    <text>Cofactor biosynthesis; 7,8-dihydroneopterin triphosphate biosynthesis; 7,8-dihydroneopterin triphosphate from GTP: step 1/1.</text>
</comment>
<comment type="subunit">
    <text evidence="1">Toroid-shaped homodecamer, composed of two pentamers of five dimers.</text>
</comment>
<comment type="similarity">
    <text evidence="2">Belongs to the GTP cyclohydrolase I family.</text>
</comment>
<protein>
    <recommendedName>
        <fullName>GTP cyclohydrolase 1</fullName>
        <ecNumber>3.5.4.16</ecNumber>
    </recommendedName>
    <alternativeName>
        <fullName>GTP cyclohydrolase I</fullName>
        <shortName>GTP-CH-I</shortName>
    </alternativeName>
</protein>
<evidence type="ECO:0000250" key="1"/>
<evidence type="ECO:0000305" key="2"/>
<feature type="initiator methionine" description="Removed" evidence="1">
    <location>
        <position position="1"/>
    </location>
</feature>
<feature type="chain" id="PRO_0000119405" description="GTP cyclohydrolase 1">
    <location>
        <begin position="2"/>
        <end position="222"/>
    </location>
</feature>
<feature type="binding site" evidence="1">
    <location>
        <position position="111"/>
    </location>
    <ligand>
        <name>Zn(2+)</name>
        <dbReference type="ChEBI" id="CHEBI:29105"/>
    </ligand>
</feature>
<feature type="binding site" evidence="1">
    <location>
        <position position="114"/>
    </location>
    <ligand>
        <name>Zn(2+)</name>
        <dbReference type="ChEBI" id="CHEBI:29105"/>
    </ligand>
</feature>
<feature type="binding site" evidence="1">
    <location>
        <position position="182"/>
    </location>
    <ligand>
        <name>Zn(2+)</name>
        <dbReference type="ChEBI" id="CHEBI:29105"/>
    </ligand>
</feature>
<dbReference type="EC" id="3.5.4.16"/>
<dbReference type="EMBL" id="AE014075">
    <property type="protein sequence ID" value="AAN81144.1"/>
    <property type="molecule type" value="Genomic_DNA"/>
</dbReference>
<dbReference type="RefSeq" id="WP_001139613.1">
    <property type="nucleotide sequence ID" value="NZ_CP051263.1"/>
</dbReference>
<dbReference type="SMR" id="P0A6T6"/>
<dbReference type="STRING" id="199310.c2688"/>
<dbReference type="GeneID" id="93775029"/>
<dbReference type="KEGG" id="ecc:c2688"/>
<dbReference type="eggNOG" id="COG0302">
    <property type="taxonomic scope" value="Bacteria"/>
</dbReference>
<dbReference type="HOGENOM" id="CLU_049768_3_2_6"/>
<dbReference type="BioCyc" id="ECOL199310:C2688-MONOMER"/>
<dbReference type="UniPathway" id="UPA00848">
    <property type="reaction ID" value="UER00151"/>
</dbReference>
<dbReference type="Proteomes" id="UP000001410">
    <property type="component" value="Chromosome"/>
</dbReference>
<dbReference type="GO" id="GO:0005737">
    <property type="term" value="C:cytoplasm"/>
    <property type="evidence" value="ECO:0007669"/>
    <property type="project" value="TreeGrafter"/>
</dbReference>
<dbReference type="GO" id="GO:0005525">
    <property type="term" value="F:GTP binding"/>
    <property type="evidence" value="ECO:0007669"/>
    <property type="project" value="UniProtKB-KW"/>
</dbReference>
<dbReference type="GO" id="GO:0003934">
    <property type="term" value="F:GTP cyclohydrolase I activity"/>
    <property type="evidence" value="ECO:0007669"/>
    <property type="project" value="UniProtKB-UniRule"/>
</dbReference>
<dbReference type="GO" id="GO:0008270">
    <property type="term" value="F:zinc ion binding"/>
    <property type="evidence" value="ECO:0007669"/>
    <property type="project" value="UniProtKB-UniRule"/>
</dbReference>
<dbReference type="GO" id="GO:0006730">
    <property type="term" value="P:one-carbon metabolic process"/>
    <property type="evidence" value="ECO:0007669"/>
    <property type="project" value="UniProtKB-UniRule"/>
</dbReference>
<dbReference type="GO" id="GO:0006729">
    <property type="term" value="P:tetrahydrobiopterin biosynthetic process"/>
    <property type="evidence" value="ECO:0007669"/>
    <property type="project" value="TreeGrafter"/>
</dbReference>
<dbReference type="GO" id="GO:0046654">
    <property type="term" value="P:tetrahydrofolate biosynthetic process"/>
    <property type="evidence" value="ECO:0007669"/>
    <property type="project" value="UniProtKB-UniRule"/>
</dbReference>
<dbReference type="CDD" id="cd00642">
    <property type="entry name" value="GTP_cyclohydro1"/>
    <property type="match status" value="1"/>
</dbReference>
<dbReference type="FunFam" id="1.10.286.10:FF:000002">
    <property type="entry name" value="GTP cyclohydrolase 1"/>
    <property type="match status" value="1"/>
</dbReference>
<dbReference type="FunFam" id="3.30.1130.10:FF:000001">
    <property type="entry name" value="GTP cyclohydrolase 1"/>
    <property type="match status" value="1"/>
</dbReference>
<dbReference type="Gene3D" id="1.10.286.10">
    <property type="match status" value="1"/>
</dbReference>
<dbReference type="Gene3D" id="3.30.1130.10">
    <property type="match status" value="1"/>
</dbReference>
<dbReference type="HAMAP" id="MF_00223">
    <property type="entry name" value="FolE"/>
    <property type="match status" value="1"/>
</dbReference>
<dbReference type="InterPro" id="IPR043133">
    <property type="entry name" value="GTP-CH-I_C/QueF"/>
</dbReference>
<dbReference type="InterPro" id="IPR043134">
    <property type="entry name" value="GTP-CH-I_N"/>
</dbReference>
<dbReference type="InterPro" id="IPR001474">
    <property type="entry name" value="GTP_CycHdrlase_I"/>
</dbReference>
<dbReference type="InterPro" id="IPR018234">
    <property type="entry name" value="GTP_CycHdrlase_I_CS"/>
</dbReference>
<dbReference type="InterPro" id="IPR020602">
    <property type="entry name" value="GTP_CycHdrlase_I_dom"/>
</dbReference>
<dbReference type="NCBIfam" id="TIGR00063">
    <property type="entry name" value="folE"/>
    <property type="match status" value="1"/>
</dbReference>
<dbReference type="NCBIfam" id="NF006824">
    <property type="entry name" value="PRK09347.1-1"/>
    <property type="match status" value="1"/>
</dbReference>
<dbReference type="NCBIfam" id="NF006826">
    <property type="entry name" value="PRK09347.1-3"/>
    <property type="match status" value="1"/>
</dbReference>
<dbReference type="PANTHER" id="PTHR11109:SF7">
    <property type="entry name" value="GTP CYCLOHYDROLASE 1"/>
    <property type="match status" value="1"/>
</dbReference>
<dbReference type="PANTHER" id="PTHR11109">
    <property type="entry name" value="GTP CYCLOHYDROLASE I"/>
    <property type="match status" value="1"/>
</dbReference>
<dbReference type="Pfam" id="PF01227">
    <property type="entry name" value="GTP_cyclohydroI"/>
    <property type="match status" value="1"/>
</dbReference>
<dbReference type="SUPFAM" id="SSF55620">
    <property type="entry name" value="Tetrahydrobiopterin biosynthesis enzymes-like"/>
    <property type="match status" value="1"/>
</dbReference>
<dbReference type="PROSITE" id="PS00859">
    <property type="entry name" value="GTP_CYCLOHYDROL_1_1"/>
    <property type="match status" value="1"/>
</dbReference>
<dbReference type="PROSITE" id="PS00860">
    <property type="entry name" value="GTP_CYCLOHYDROL_1_2"/>
    <property type="match status" value="1"/>
</dbReference>
<name>GCH1_ECOL6</name>
<keyword id="KW-0342">GTP-binding</keyword>
<keyword id="KW-0378">Hydrolase</keyword>
<keyword id="KW-0479">Metal-binding</keyword>
<keyword id="KW-0547">Nucleotide-binding</keyword>
<keyword id="KW-0554">One-carbon metabolism</keyword>
<keyword id="KW-1185">Reference proteome</keyword>
<keyword id="KW-0862">Zinc</keyword>
<reference key="1">
    <citation type="journal article" date="2002" name="Proc. Natl. Acad. Sci. U.S.A.">
        <title>Extensive mosaic structure revealed by the complete genome sequence of uropathogenic Escherichia coli.</title>
        <authorList>
            <person name="Welch R.A."/>
            <person name="Burland V."/>
            <person name="Plunkett G. III"/>
            <person name="Redford P."/>
            <person name="Roesch P."/>
            <person name="Rasko D."/>
            <person name="Buckles E.L."/>
            <person name="Liou S.-R."/>
            <person name="Boutin A."/>
            <person name="Hackett J."/>
            <person name="Stroud D."/>
            <person name="Mayhew G.F."/>
            <person name="Rose D.J."/>
            <person name="Zhou S."/>
            <person name="Schwartz D.C."/>
            <person name="Perna N.T."/>
            <person name="Mobley H.L.T."/>
            <person name="Donnenberg M.S."/>
            <person name="Blattner F.R."/>
        </authorList>
    </citation>
    <scope>NUCLEOTIDE SEQUENCE [LARGE SCALE GENOMIC DNA]</scope>
    <source>
        <strain>CFT073 / ATCC 700928 / UPEC</strain>
    </source>
</reference>
<proteinExistence type="inferred from homology"/>
<accession>P0A6T6</accession>
<accession>P27511</accession>